<dbReference type="EC" id="2.8.3.-"/>
<dbReference type="EMBL" id="L21902">
    <property type="protein sequence ID" value="AAA92344.1"/>
    <property type="molecule type" value="Genomic_DNA"/>
</dbReference>
<dbReference type="EMBL" id="CP000673">
    <property type="protein sequence ID" value="EDK35026.1"/>
    <property type="molecule type" value="Genomic_DNA"/>
</dbReference>
<dbReference type="RefSeq" id="WP_012103361.1">
    <property type="nucleotide sequence ID" value="NC_009706.1"/>
</dbReference>
<dbReference type="SMR" id="P38942"/>
<dbReference type="STRING" id="431943.CKL_3018"/>
<dbReference type="KEGG" id="ckl:CKL_3018"/>
<dbReference type="eggNOG" id="COG0427">
    <property type="taxonomic scope" value="Bacteria"/>
</dbReference>
<dbReference type="HOGENOM" id="CLU_030703_1_0_9"/>
<dbReference type="BioCyc" id="MetaCyc:MONOMER-13467"/>
<dbReference type="Proteomes" id="UP000002411">
    <property type="component" value="Chromosome"/>
</dbReference>
<dbReference type="GO" id="GO:0008775">
    <property type="term" value="F:acetate CoA-transferase activity"/>
    <property type="evidence" value="ECO:0007669"/>
    <property type="project" value="InterPro"/>
</dbReference>
<dbReference type="GO" id="GO:0006083">
    <property type="term" value="P:acetate metabolic process"/>
    <property type="evidence" value="ECO:0007669"/>
    <property type="project" value="InterPro"/>
</dbReference>
<dbReference type="Gene3D" id="3.30.750.70">
    <property type="entry name" value="4-hydroxybutyrate coenzyme like domains"/>
    <property type="match status" value="1"/>
</dbReference>
<dbReference type="Gene3D" id="3.40.1080.20">
    <property type="entry name" value="Acetyl-CoA hydrolase/transferase C-terminal domain"/>
    <property type="match status" value="1"/>
</dbReference>
<dbReference type="Gene3D" id="3.40.1080.10">
    <property type="entry name" value="Glutaconate Coenzyme A-transferase"/>
    <property type="match status" value="1"/>
</dbReference>
<dbReference type="InterPro" id="IPR026888">
    <property type="entry name" value="AcetylCoA_hyd_C"/>
</dbReference>
<dbReference type="InterPro" id="IPR038460">
    <property type="entry name" value="AcetylCoA_hyd_C_sf"/>
</dbReference>
<dbReference type="InterPro" id="IPR046433">
    <property type="entry name" value="ActCoA_hydro"/>
</dbReference>
<dbReference type="InterPro" id="IPR003702">
    <property type="entry name" value="ActCoA_hydro_N"/>
</dbReference>
<dbReference type="InterPro" id="IPR037171">
    <property type="entry name" value="NagB/RpiA_transferase-like"/>
</dbReference>
<dbReference type="PANTHER" id="PTHR21432:SF20">
    <property type="entry name" value="ACETYL-COA HYDROLASE"/>
    <property type="match status" value="1"/>
</dbReference>
<dbReference type="PANTHER" id="PTHR21432">
    <property type="entry name" value="ACETYL-COA HYDROLASE-RELATED"/>
    <property type="match status" value="1"/>
</dbReference>
<dbReference type="Pfam" id="PF13336">
    <property type="entry name" value="AcetylCoA_hyd_C"/>
    <property type="match status" value="1"/>
</dbReference>
<dbReference type="Pfam" id="PF02550">
    <property type="entry name" value="AcetylCoA_hydro"/>
    <property type="match status" value="1"/>
</dbReference>
<dbReference type="SUPFAM" id="SSF100950">
    <property type="entry name" value="NagB/RpiA/CoA transferase-like"/>
    <property type="match status" value="2"/>
</dbReference>
<reference key="1">
    <citation type="submission" date="1996-02" db="EMBL/GenBank/DDBJ databases">
        <authorList>
            <person name="Soehling B."/>
            <person name="Gottschalk G."/>
        </authorList>
    </citation>
    <scope>NUCLEOTIDE SEQUENCE [GENOMIC DNA]</scope>
</reference>
<reference key="2">
    <citation type="journal article" date="2008" name="Proc. Natl. Acad. Sci. U.S.A.">
        <title>The genome of Clostridium kluyveri, a strict anaerobe with unique metabolic features.</title>
        <authorList>
            <person name="Seedorf H."/>
            <person name="Fricke W.F."/>
            <person name="Veith B."/>
            <person name="Brueggemann H."/>
            <person name="Liesegang H."/>
            <person name="Strittmatter A."/>
            <person name="Miethke M."/>
            <person name="Buckel W."/>
            <person name="Hinderberger J."/>
            <person name="Li F."/>
            <person name="Hagemeier C."/>
            <person name="Thauer R.K."/>
            <person name="Gottschalk G."/>
        </authorList>
    </citation>
    <scope>NUCLEOTIDE SEQUENCE [LARGE SCALE GENOMIC DNA]</scope>
    <source>
        <strain>ATCC 8527 / DSM 555 / NBRC 12016 / NCIMB 10680 / K1</strain>
    </source>
</reference>
<reference key="3">
    <citation type="journal article" date="1996" name="J. Bacteriol.">
        <title>Molecular analysis of the anaerobic succinate degradation pathway in Clostridium kluyveri.</title>
        <authorList>
            <person name="Soehling B."/>
            <person name="Gottschalk G."/>
        </authorList>
    </citation>
    <scope>NUCLEOTIDE SEQUENCE [GENOMIC DNA] OF 149-429</scope>
</reference>
<organism>
    <name type="scientific">Clostridium kluyveri (strain ATCC 8527 / DSM 555 / NBRC 12016 / NCIMB 10680 / K1)</name>
    <dbReference type="NCBI Taxonomy" id="431943"/>
    <lineage>
        <taxon>Bacteria</taxon>
        <taxon>Bacillati</taxon>
        <taxon>Bacillota</taxon>
        <taxon>Clostridia</taxon>
        <taxon>Eubacteriales</taxon>
        <taxon>Clostridiaceae</taxon>
        <taxon>Clostridium</taxon>
    </lineage>
</organism>
<accession>P38942</accession>
<accession>A5N1N0</accession>
<name>CAT2_CLOK5</name>
<sequence length="429" mass="47133">MEWEEIYKEKLVTAEKAVSKIENHSRVVFAHAVGEPVDLVNALVKNKDNYIGLEIVHMVAMGKGEYTKEGMQRHFRHNALFVGGCTRDAVNSGRADYTPCFFYEVPSLFKEKRLPVDVALIQVSEPDKYGYCSFGVSNDYTKPAAESAKLVIAEVNKNMPRTLGDSFIHVSDIDYIVEASHPLLELQPPKLGDVEKAIGENCASLIEDGATLQLGIGAIPDAVLLFLKNKKNLGIHSEMISDGVMELVKAGVINNKKKTLHPGKIVVTFLMGTKKLYDFVNNNPMVETYSVDYVNNPLVIMKNDNMVSINSCVQVDLMGQVCSESIGLKQISGVGGQVDFIRGANLSKGGKAIIAIPSTAGKGKVSRITPLLDTGAAVTTSRNEVDYVVTEYGVAHLKGKTLRNRARALINIAHPKFRESLMNEFKKRF</sequence>
<comment type="similarity">
    <text evidence="2">Belongs to the acetyl-CoA hydrolase/transferase family.</text>
</comment>
<evidence type="ECO:0000250" key="1">
    <source>
        <dbReference type="UniProtKB" id="B3EY95"/>
    </source>
</evidence>
<evidence type="ECO:0000305" key="2"/>
<feature type="chain" id="PRO_0000215526" description="4-hydroxybutyrate coenzyme A transferase">
    <location>
        <begin position="1"/>
        <end position="429"/>
    </location>
</feature>
<feature type="active site" description="5-glutamyl coenzyme A thioester intermediate" evidence="1">
    <location>
        <position position="238"/>
    </location>
</feature>
<feature type="binding site" evidence="1">
    <location>
        <begin position="215"/>
        <end position="219"/>
    </location>
    <ligand>
        <name>CoA</name>
        <dbReference type="ChEBI" id="CHEBI:57287"/>
    </ligand>
</feature>
<feature type="binding site" evidence="1">
    <location>
        <position position="336"/>
    </location>
    <ligand>
        <name>CoA</name>
        <dbReference type="ChEBI" id="CHEBI:57287"/>
    </ligand>
</feature>
<feature type="sequence conflict" description="In Ref. 1; AAA92344." evidence="2" ref="1">
    <original>E</original>
    <variation>V</variation>
    <location>
        <position position="65"/>
    </location>
</feature>
<feature type="sequence conflict" description="In Ref. 1; AAA92344." evidence="2" ref="1">
    <original>C</original>
    <variation>S</variation>
    <location>
        <position position="85"/>
    </location>
</feature>
<feature type="sequence conflict" description="In Ref. 1; AAA92344." evidence="2" ref="1">
    <original>D</original>
    <variation>V</variation>
    <location>
        <position position="96"/>
    </location>
</feature>
<proteinExistence type="inferred from homology"/>
<keyword id="KW-1185">Reference proteome</keyword>
<keyword id="KW-0808">Transferase</keyword>
<protein>
    <recommendedName>
        <fullName>4-hydroxybutyrate coenzyme A transferase</fullName>
        <ecNumber>2.8.3.-</ecNumber>
    </recommendedName>
</protein>
<gene>
    <name type="primary">cat2</name>
    <name type="ordered locus">CKL_3018</name>
</gene>